<proteinExistence type="evidence at transcript level"/>
<comment type="function">
    <text evidence="2">mRNA cap-binding component of the eukaryotic translation initiation factor 3 (eIF-3) complex, which is involved in protein synthesis of a specialized repertoire of mRNAs and, together with other initiation factors, stimulates binding of mRNA and methionyl-tRNAi to the 40S ribosome. The eIF-3 complex specifically targets and initiates translation of a subset of mRNAs involved in cell proliferation. In the eIF-3 complex, eif3d specifically recognizes and binds the 7-methylguanosine cap of a subset of mRNAs.</text>
</comment>
<comment type="subunit">
    <text evidence="2">Component of the eukaryotic translation initiation factor 3 (eIF-3) complex, which is composed of 13 subunits: eif3a, eif3b, eif3c, eif3d, eif3e, eif3f, eif3g, eif3h, eif3i, eif3j, eif3k, eif3l and eif3m.</text>
</comment>
<comment type="subcellular location">
    <subcellularLocation>
        <location evidence="2">Cytoplasm</location>
    </subcellularLocation>
</comment>
<comment type="domain">
    <text evidence="2">The RNA gate region regulates mRNA cap recognition to prevent promiscuous mRNA-binding before assembly of eif3d into the full eukaryotic translation initiation factor 3 (eIF-3) complex.</text>
</comment>
<comment type="similarity">
    <text evidence="2">Belongs to the eIF-3 subunit D family.</text>
</comment>
<comment type="sequence caution" evidence="4">
    <conflict type="erroneous gene model prediction">
        <sequence resource="EMBL-CDS" id="CAM15128"/>
    </conflict>
</comment>
<reference key="1">
    <citation type="journal article" date="2004" name="Proc. Natl. Acad. Sci. U.S.A.">
        <title>Identification of 315 genes essential for early zebrafish development.</title>
        <authorList>
            <person name="Amsterdam A."/>
            <person name="Nissen R.M."/>
            <person name="Sun Z."/>
            <person name="Swindell E.C."/>
            <person name="Farrington S."/>
            <person name="Hopkins N."/>
        </authorList>
    </citation>
    <scope>NUCLEOTIDE SEQUENCE [LARGE SCALE MRNA]</scope>
    <source>
        <tissue>Embryo</tissue>
    </source>
</reference>
<reference key="2">
    <citation type="journal article" date="2004" name="Proc. Natl. Acad. Sci. U.S.A.">
        <title>Hematopoietic gene expression profile in zebrafish kidney marrow.</title>
        <authorList>
            <person name="Song H.-D."/>
            <person name="Sun X.-J."/>
            <person name="Deng M."/>
            <person name="Zhang G.-W."/>
            <person name="Zhou Y."/>
            <person name="Wu X.-Y."/>
            <person name="Sheng Y."/>
            <person name="Chen Y."/>
            <person name="Ruan Z."/>
            <person name="Jiang C.-L."/>
            <person name="Fan H.-Y."/>
            <person name="Zon L.I."/>
            <person name="Kanki J.P."/>
            <person name="Liu T.X."/>
            <person name="Look A.T."/>
            <person name="Chen Z."/>
        </authorList>
    </citation>
    <scope>NUCLEOTIDE SEQUENCE [LARGE SCALE MRNA]</scope>
    <source>
        <tissue>Kidney marrow</tissue>
    </source>
</reference>
<reference key="3">
    <citation type="journal article" date="2013" name="Nature">
        <title>The zebrafish reference genome sequence and its relationship to the human genome.</title>
        <authorList>
            <person name="Howe K."/>
            <person name="Clark M.D."/>
            <person name="Torroja C.F."/>
            <person name="Torrance J."/>
            <person name="Berthelot C."/>
            <person name="Muffato M."/>
            <person name="Collins J.E."/>
            <person name="Humphray S."/>
            <person name="McLaren K."/>
            <person name="Matthews L."/>
            <person name="McLaren S."/>
            <person name="Sealy I."/>
            <person name="Caccamo M."/>
            <person name="Churcher C."/>
            <person name="Scott C."/>
            <person name="Barrett J.C."/>
            <person name="Koch R."/>
            <person name="Rauch G.J."/>
            <person name="White S."/>
            <person name="Chow W."/>
            <person name="Kilian B."/>
            <person name="Quintais L.T."/>
            <person name="Guerra-Assuncao J.A."/>
            <person name="Zhou Y."/>
            <person name="Gu Y."/>
            <person name="Yen J."/>
            <person name="Vogel J.H."/>
            <person name="Eyre T."/>
            <person name="Redmond S."/>
            <person name="Banerjee R."/>
            <person name="Chi J."/>
            <person name="Fu B."/>
            <person name="Langley E."/>
            <person name="Maguire S.F."/>
            <person name="Laird G.K."/>
            <person name="Lloyd D."/>
            <person name="Kenyon E."/>
            <person name="Donaldson S."/>
            <person name="Sehra H."/>
            <person name="Almeida-King J."/>
            <person name="Loveland J."/>
            <person name="Trevanion S."/>
            <person name="Jones M."/>
            <person name="Quail M."/>
            <person name="Willey D."/>
            <person name="Hunt A."/>
            <person name="Burton J."/>
            <person name="Sims S."/>
            <person name="McLay K."/>
            <person name="Plumb B."/>
            <person name="Davis J."/>
            <person name="Clee C."/>
            <person name="Oliver K."/>
            <person name="Clark R."/>
            <person name="Riddle C."/>
            <person name="Elliot D."/>
            <person name="Threadgold G."/>
            <person name="Harden G."/>
            <person name="Ware D."/>
            <person name="Begum S."/>
            <person name="Mortimore B."/>
            <person name="Kerry G."/>
            <person name="Heath P."/>
            <person name="Phillimore B."/>
            <person name="Tracey A."/>
            <person name="Corby N."/>
            <person name="Dunn M."/>
            <person name="Johnson C."/>
            <person name="Wood J."/>
            <person name="Clark S."/>
            <person name="Pelan S."/>
            <person name="Griffiths G."/>
            <person name="Smith M."/>
            <person name="Glithero R."/>
            <person name="Howden P."/>
            <person name="Barker N."/>
            <person name="Lloyd C."/>
            <person name="Stevens C."/>
            <person name="Harley J."/>
            <person name="Holt K."/>
            <person name="Panagiotidis G."/>
            <person name="Lovell J."/>
            <person name="Beasley H."/>
            <person name="Henderson C."/>
            <person name="Gordon D."/>
            <person name="Auger K."/>
            <person name="Wright D."/>
            <person name="Collins J."/>
            <person name="Raisen C."/>
            <person name="Dyer L."/>
            <person name="Leung K."/>
            <person name="Robertson L."/>
            <person name="Ambridge K."/>
            <person name="Leongamornlert D."/>
            <person name="McGuire S."/>
            <person name="Gilderthorp R."/>
            <person name="Griffiths C."/>
            <person name="Manthravadi D."/>
            <person name="Nichol S."/>
            <person name="Barker G."/>
            <person name="Whitehead S."/>
            <person name="Kay M."/>
            <person name="Brown J."/>
            <person name="Murnane C."/>
            <person name="Gray E."/>
            <person name="Humphries M."/>
            <person name="Sycamore N."/>
            <person name="Barker D."/>
            <person name="Saunders D."/>
            <person name="Wallis J."/>
            <person name="Babbage A."/>
            <person name="Hammond S."/>
            <person name="Mashreghi-Mohammadi M."/>
            <person name="Barr L."/>
            <person name="Martin S."/>
            <person name="Wray P."/>
            <person name="Ellington A."/>
            <person name="Matthews N."/>
            <person name="Ellwood M."/>
            <person name="Woodmansey R."/>
            <person name="Clark G."/>
            <person name="Cooper J."/>
            <person name="Tromans A."/>
            <person name="Grafham D."/>
            <person name="Skuce C."/>
            <person name="Pandian R."/>
            <person name="Andrews R."/>
            <person name="Harrison E."/>
            <person name="Kimberley A."/>
            <person name="Garnett J."/>
            <person name="Fosker N."/>
            <person name="Hall R."/>
            <person name="Garner P."/>
            <person name="Kelly D."/>
            <person name="Bird C."/>
            <person name="Palmer S."/>
            <person name="Gehring I."/>
            <person name="Berger A."/>
            <person name="Dooley C.M."/>
            <person name="Ersan-Urun Z."/>
            <person name="Eser C."/>
            <person name="Geiger H."/>
            <person name="Geisler M."/>
            <person name="Karotki L."/>
            <person name="Kirn A."/>
            <person name="Konantz J."/>
            <person name="Konantz M."/>
            <person name="Oberlander M."/>
            <person name="Rudolph-Geiger S."/>
            <person name="Teucke M."/>
            <person name="Lanz C."/>
            <person name="Raddatz G."/>
            <person name="Osoegawa K."/>
            <person name="Zhu B."/>
            <person name="Rapp A."/>
            <person name="Widaa S."/>
            <person name="Langford C."/>
            <person name="Yang F."/>
            <person name="Schuster S.C."/>
            <person name="Carter N.P."/>
            <person name="Harrow J."/>
            <person name="Ning Z."/>
            <person name="Herrero J."/>
            <person name="Searle S.M."/>
            <person name="Enright A."/>
            <person name="Geisler R."/>
            <person name="Plasterk R.H."/>
            <person name="Lee C."/>
            <person name="Westerfield M."/>
            <person name="de Jong P.J."/>
            <person name="Zon L.I."/>
            <person name="Postlethwait J.H."/>
            <person name="Nusslein-Volhard C."/>
            <person name="Hubbard T.J."/>
            <person name="Roest Crollius H."/>
            <person name="Rogers J."/>
            <person name="Stemple D.L."/>
        </authorList>
    </citation>
    <scope>NUCLEOTIDE SEQUENCE [LARGE SCALE GENOMIC DNA]</scope>
    <source>
        <strain>Tuebingen</strain>
    </source>
</reference>
<reference key="4">
    <citation type="submission" date="2003-06" db="EMBL/GenBank/DDBJ databases">
        <authorList>
            <consortium name="NIH - Zebrafish Gene Collection (ZGC) project"/>
        </authorList>
    </citation>
    <scope>NUCLEOTIDE SEQUENCE [LARGE SCALE MRNA]</scope>
    <source>
        <tissue>Kidney</tissue>
    </source>
</reference>
<feature type="chain" id="PRO_0000364134" description="Eukaryotic translation initiation factor 3 subunit D">
    <location>
        <begin position="1"/>
        <end position="552"/>
    </location>
</feature>
<feature type="region of interest" description="RNA gate" evidence="1">
    <location>
        <begin position="288"/>
        <end position="302"/>
    </location>
</feature>
<feature type="region of interest" description="Disordered" evidence="3">
    <location>
        <begin position="525"/>
        <end position="552"/>
    </location>
</feature>
<feature type="compositionally biased region" description="Acidic residues" evidence="3">
    <location>
        <begin position="532"/>
        <end position="552"/>
    </location>
</feature>
<feature type="sequence conflict" description="In Ref. 3; CAM15128." evidence="4" ref="3">
    <location>
        <begin position="155"/>
        <end position="156"/>
    </location>
</feature>
<feature type="sequence conflict" description="In Ref. 4; AAH53250." evidence="4" ref="4">
    <original>E</original>
    <variation>D</variation>
    <location>
        <position position="505"/>
    </location>
</feature>
<name>EIF3D_DANRE</name>
<keyword id="KW-0963">Cytoplasm</keyword>
<keyword id="KW-0396">Initiation factor</keyword>
<keyword id="KW-0648">Protein biosynthesis</keyword>
<keyword id="KW-1185">Reference proteome</keyword>
<keyword id="KW-0694">RNA-binding</keyword>
<evidence type="ECO:0000250" key="1">
    <source>
        <dbReference type="UniProtKB" id="K7IM66"/>
    </source>
</evidence>
<evidence type="ECO:0000255" key="2">
    <source>
        <dbReference type="HAMAP-Rule" id="MF_03003"/>
    </source>
</evidence>
<evidence type="ECO:0000256" key="3">
    <source>
        <dbReference type="SAM" id="MobiDB-lite"/>
    </source>
</evidence>
<evidence type="ECO:0000305" key="4"/>
<gene>
    <name type="primary">eif3d</name>
    <name type="synonym">eif3s7</name>
    <name type="ORF">si:dkey-165I8.6</name>
</gene>
<dbReference type="EMBL" id="AY648769">
    <property type="protein sequence ID" value="AAT68087.1"/>
    <property type="molecule type" value="mRNA"/>
</dbReference>
<dbReference type="EMBL" id="AY398341">
    <property type="protein sequence ID" value="AAQ97774.1"/>
    <property type="molecule type" value="mRNA"/>
</dbReference>
<dbReference type="EMBL" id="BX571960">
    <property type="protein sequence ID" value="CAM15128.1"/>
    <property type="status" value="ALT_SEQ"/>
    <property type="molecule type" value="Genomic_DNA"/>
</dbReference>
<dbReference type="EMBL" id="BC053250">
    <property type="protein sequence ID" value="AAH53250.1"/>
    <property type="molecule type" value="mRNA"/>
</dbReference>
<dbReference type="RefSeq" id="NP_956310.1">
    <property type="nucleotide sequence ID" value="NM_200016.1"/>
</dbReference>
<dbReference type="SMR" id="Q6TH15"/>
<dbReference type="FunCoup" id="Q6TH15">
    <property type="interactions" value="3125"/>
</dbReference>
<dbReference type="STRING" id="7955.ENSDARP00000011011"/>
<dbReference type="PaxDb" id="7955-ENSDARP00000011011"/>
<dbReference type="Ensembl" id="ENSDART00000011052">
    <property type="protein sequence ID" value="ENSDARP00000011011"/>
    <property type="gene ID" value="ENSDARG00000021257"/>
</dbReference>
<dbReference type="GeneID" id="336498"/>
<dbReference type="KEGG" id="dre:336498"/>
<dbReference type="AGR" id="ZFIN:ZDB-GENE-030131-8442"/>
<dbReference type="CTD" id="8664"/>
<dbReference type="ZFIN" id="ZDB-GENE-030131-8442">
    <property type="gene designation" value="eif3d"/>
</dbReference>
<dbReference type="eggNOG" id="KOG2479">
    <property type="taxonomic scope" value="Eukaryota"/>
</dbReference>
<dbReference type="InParanoid" id="Q6TH15"/>
<dbReference type="OMA" id="FMDKRDN"/>
<dbReference type="OrthoDB" id="16538at2759"/>
<dbReference type="PhylomeDB" id="Q6TH15"/>
<dbReference type="TreeFam" id="TF101519"/>
<dbReference type="Reactome" id="R-DRE-156827">
    <property type="pathway name" value="L13a-mediated translational silencing of Ceruloplasmin expression"/>
</dbReference>
<dbReference type="Reactome" id="R-DRE-72689">
    <property type="pathway name" value="Formation of a pool of free 40S subunits"/>
</dbReference>
<dbReference type="Reactome" id="R-DRE-72695">
    <property type="pathway name" value="Formation of the ternary complex, and subsequently, the 43S complex"/>
</dbReference>
<dbReference type="Reactome" id="R-DRE-72702">
    <property type="pathway name" value="Ribosomal scanning and start codon recognition"/>
</dbReference>
<dbReference type="PRO" id="PR:Q6TH15"/>
<dbReference type="Proteomes" id="UP000000437">
    <property type="component" value="Chromosome 3"/>
</dbReference>
<dbReference type="Bgee" id="ENSDARG00000021257">
    <property type="expression patterns" value="Expressed in somite and 29 other cell types or tissues"/>
</dbReference>
<dbReference type="ExpressionAtlas" id="Q6TH15">
    <property type="expression patterns" value="baseline and differential"/>
</dbReference>
<dbReference type="GO" id="GO:0016282">
    <property type="term" value="C:eukaryotic 43S preinitiation complex"/>
    <property type="evidence" value="ECO:0007669"/>
    <property type="project" value="UniProtKB-UniRule"/>
</dbReference>
<dbReference type="GO" id="GO:0033290">
    <property type="term" value="C:eukaryotic 48S preinitiation complex"/>
    <property type="evidence" value="ECO:0007669"/>
    <property type="project" value="UniProtKB-UniRule"/>
</dbReference>
<dbReference type="GO" id="GO:0005852">
    <property type="term" value="C:eukaryotic translation initiation factor 3 complex"/>
    <property type="evidence" value="ECO:0000250"/>
    <property type="project" value="UniProtKB"/>
</dbReference>
<dbReference type="GO" id="GO:0098808">
    <property type="term" value="F:mRNA cap binding"/>
    <property type="evidence" value="ECO:0000250"/>
    <property type="project" value="UniProtKB"/>
</dbReference>
<dbReference type="GO" id="GO:0003723">
    <property type="term" value="F:RNA binding"/>
    <property type="evidence" value="ECO:0000250"/>
    <property type="project" value="UniProtKB"/>
</dbReference>
<dbReference type="GO" id="GO:0003743">
    <property type="term" value="F:translation initiation factor activity"/>
    <property type="evidence" value="ECO:0000318"/>
    <property type="project" value="GO_Central"/>
</dbReference>
<dbReference type="GO" id="GO:0002191">
    <property type="term" value="P:cap-dependent translational initiation"/>
    <property type="evidence" value="ECO:0000250"/>
    <property type="project" value="UniProtKB"/>
</dbReference>
<dbReference type="GO" id="GO:0001732">
    <property type="term" value="P:formation of cytoplasmic translation initiation complex"/>
    <property type="evidence" value="ECO:0007669"/>
    <property type="project" value="UniProtKB-UniRule"/>
</dbReference>
<dbReference type="GO" id="GO:0006413">
    <property type="term" value="P:translational initiation"/>
    <property type="evidence" value="ECO:0000250"/>
    <property type="project" value="UniProtKB"/>
</dbReference>
<dbReference type="HAMAP" id="MF_03003">
    <property type="entry name" value="eIF3d"/>
    <property type="match status" value="1"/>
</dbReference>
<dbReference type="InterPro" id="IPR007783">
    <property type="entry name" value="eIF3d"/>
</dbReference>
<dbReference type="PANTHER" id="PTHR12399">
    <property type="entry name" value="EUKARYOTIC TRANSLATION INITIATION FACTOR 3 SUBUNIT 7"/>
    <property type="match status" value="1"/>
</dbReference>
<dbReference type="PANTHER" id="PTHR12399:SF0">
    <property type="entry name" value="EUKARYOTIC TRANSLATION INITIATION FACTOR 3 SUBUNIT D"/>
    <property type="match status" value="1"/>
</dbReference>
<dbReference type="Pfam" id="PF05091">
    <property type="entry name" value="eIF-3_zeta"/>
    <property type="match status" value="1"/>
</dbReference>
<dbReference type="PIRSF" id="PIRSF016281">
    <property type="entry name" value="EIF-3_zeta"/>
    <property type="match status" value="1"/>
</dbReference>
<organism>
    <name type="scientific">Danio rerio</name>
    <name type="common">Zebrafish</name>
    <name type="synonym">Brachydanio rerio</name>
    <dbReference type="NCBI Taxonomy" id="7955"/>
    <lineage>
        <taxon>Eukaryota</taxon>
        <taxon>Metazoa</taxon>
        <taxon>Chordata</taxon>
        <taxon>Craniata</taxon>
        <taxon>Vertebrata</taxon>
        <taxon>Euteleostomi</taxon>
        <taxon>Actinopterygii</taxon>
        <taxon>Neopterygii</taxon>
        <taxon>Teleostei</taxon>
        <taxon>Ostariophysi</taxon>
        <taxon>Cypriniformes</taxon>
        <taxon>Danionidae</taxon>
        <taxon>Danioninae</taxon>
        <taxon>Danio</taxon>
    </lineage>
</organism>
<accession>Q6TH15</accession>
<accession>A2BHH8</accession>
<accession>Q7T353</accession>
<protein>
    <recommendedName>
        <fullName evidence="2">Eukaryotic translation initiation factor 3 subunit D</fullName>
        <shortName evidence="2">eIF3d</shortName>
    </recommendedName>
    <alternativeName>
        <fullName evidence="2">Eukaryotic translation initiation factor 3 subunit 7</fullName>
    </alternativeName>
</protein>
<sequence>MAKFHAPVIQDNPSGWGPCAVPEKFKDMPYQPFSKGDRLGKVADWTGATYQDKRYTNKYSSQFGGGSQYAYFHEEDEASFQLVDTAKTQKTAYQRNRMRFAQRNLRRDKDRRTLTQFNMQTLPKSAKQKERDRMRLQKKFQKQFGVRQKWDQKSQAQLKPRDSSVEVRSDWEVKEEMDFPRLMKMRYMDVADPLDIECCGALEHYDKAFDRITTRNEKPLKSIKRIFHTVTTTDDPVIRKLAKTQGNVFATDAILATLMCCTRSVNSWDIIVQRVGNKLFFDKRDNSDFDLLTVSETANEPPQDEGSSLNSPRNLAMEATYINHNFSQQCLRMGGERYKFPNPNPFVEEDTEKSEVASVAYRYRRWKLGEDIDLIVRCEHDGVMTGANGEVSFINVKTLNEWDSRYCNGVDWRQKLDSQRGAVLATELKNNSYKLARWTCCAILAGSEYLKLGYVSRYHVKDSSRHVVLGTQQFKPNEFASQINLSMENAWGILRCVIDICRKLEEGKYLILKDPNKQVIRVYSLPDGTFSSDEDEEEDDEDEEDEEEDEDN</sequence>